<dbReference type="EMBL" id="CP001108">
    <property type="protein sequence ID" value="ACF47248.1"/>
    <property type="molecule type" value="Genomic_DNA"/>
</dbReference>
<dbReference type="RefSeq" id="WP_012506778.1">
    <property type="nucleotide sequence ID" value="NC_011059.1"/>
</dbReference>
<dbReference type="SMR" id="B4S6E6"/>
<dbReference type="STRING" id="290512.Paes_2247"/>
<dbReference type="KEGG" id="paa:Paes_2247"/>
<dbReference type="eggNOG" id="COG0356">
    <property type="taxonomic scope" value="Bacteria"/>
</dbReference>
<dbReference type="HOGENOM" id="CLU_041018_0_0_10"/>
<dbReference type="Proteomes" id="UP000002725">
    <property type="component" value="Chromosome"/>
</dbReference>
<dbReference type="GO" id="GO:0005886">
    <property type="term" value="C:plasma membrane"/>
    <property type="evidence" value="ECO:0007669"/>
    <property type="project" value="UniProtKB-SubCell"/>
</dbReference>
<dbReference type="GO" id="GO:0045259">
    <property type="term" value="C:proton-transporting ATP synthase complex"/>
    <property type="evidence" value="ECO:0007669"/>
    <property type="project" value="UniProtKB-KW"/>
</dbReference>
<dbReference type="GO" id="GO:0046933">
    <property type="term" value="F:proton-transporting ATP synthase activity, rotational mechanism"/>
    <property type="evidence" value="ECO:0007669"/>
    <property type="project" value="UniProtKB-UniRule"/>
</dbReference>
<dbReference type="CDD" id="cd00310">
    <property type="entry name" value="ATP-synt_Fo_a_6"/>
    <property type="match status" value="1"/>
</dbReference>
<dbReference type="Gene3D" id="1.20.120.220">
    <property type="entry name" value="ATP synthase, F0 complex, subunit A"/>
    <property type="match status" value="1"/>
</dbReference>
<dbReference type="HAMAP" id="MF_01393">
    <property type="entry name" value="ATP_synth_a_bact"/>
    <property type="match status" value="1"/>
</dbReference>
<dbReference type="InterPro" id="IPR000568">
    <property type="entry name" value="ATP_synth_F0_asu"/>
</dbReference>
<dbReference type="InterPro" id="IPR023011">
    <property type="entry name" value="ATP_synth_F0_asu_AS"/>
</dbReference>
<dbReference type="InterPro" id="IPR045083">
    <property type="entry name" value="ATP_synth_F0_asu_bact/mt"/>
</dbReference>
<dbReference type="InterPro" id="IPR035908">
    <property type="entry name" value="F0_ATP_A_sf"/>
</dbReference>
<dbReference type="NCBIfam" id="TIGR01131">
    <property type="entry name" value="ATP_synt_6_or_A"/>
    <property type="match status" value="1"/>
</dbReference>
<dbReference type="NCBIfam" id="NF009953">
    <property type="entry name" value="PRK13419.1"/>
    <property type="match status" value="1"/>
</dbReference>
<dbReference type="PANTHER" id="PTHR11410">
    <property type="entry name" value="ATP SYNTHASE SUBUNIT A"/>
    <property type="match status" value="1"/>
</dbReference>
<dbReference type="PANTHER" id="PTHR11410:SF0">
    <property type="entry name" value="ATP SYNTHASE SUBUNIT A"/>
    <property type="match status" value="1"/>
</dbReference>
<dbReference type="Pfam" id="PF00119">
    <property type="entry name" value="ATP-synt_A"/>
    <property type="match status" value="1"/>
</dbReference>
<dbReference type="PRINTS" id="PR00123">
    <property type="entry name" value="ATPASEA"/>
</dbReference>
<dbReference type="SUPFAM" id="SSF81336">
    <property type="entry name" value="F1F0 ATP synthase subunit A"/>
    <property type="match status" value="1"/>
</dbReference>
<dbReference type="PROSITE" id="PS00449">
    <property type="entry name" value="ATPASE_A"/>
    <property type="match status" value="1"/>
</dbReference>
<sequence>MKRVNVFRSGVFSRLFALLLPFLLGINGLVYASAEAPAEAVHAEAAAHAEGGHESAGDVIMHHILDTGVMSFEPFGEVHLPQIVIGGFDISITRHVVMMWIASAILLVVFLLVGNRYKTMTSRQAPGGMANAMEALVEFIRLDVAKSNIGAGYEKHLPYLLTVFAFILLLNLLGLVPYGATATGNINVTLTLAVFTFFITQVASLKAHGIKGYLAHLTAGTHWALWIIMIPIEIIGLFTKPFALTVRLFANMTAGHIVILSLIFISFILKSYIVAMFVSVPFSIFIYLLEIFVAFLQAFIFTMLSALFIGLATAHEGHEGEAAH</sequence>
<keyword id="KW-0066">ATP synthesis</keyword>
<keyword id="KW-0997">Cell inner membrane</keyword>
<keyword id="KW-1003">Cell membrane</keyword>
<keyword id="KW-0138">CF(0)</keyword>
<keyword id="KW-0375">Hydrogen ion transport</keyword>
<keyword id="KW-0406">Ion transport</keyword>
<keyword id="KW-0472">Membrane</keyword>
<keyword id="KW-0732">Signal</keyword>
<keyword id="KW-0812">Transmembrane</keyword>
<keyword id="KW-1133">Transmembrane helix</keyword>
<keyword id="KW-0813">Transport</keyword>
<comment type="function">
    <text evidence="2">Key component of the proton channel; it plays a direct role in the translocation of protons across the membrane.</text>
</comment>
<comment type="subunit">
    <text evidence="2">F-type ATPases have 2 components, CF(1) - the catalytic core - and CF(0) - the membrane proton channel. CF(1) has five subunits: alpha(3), beta(3), gamma(1), delta(1), epsilon(1). CF(0) has four main subunits: a, b, b' and c.</text>
</comment>
<comment type="subcellular location">
    <subcellularLocation>
        <location evidence="2">Cell inner membrane</location>
        <topology evidence="2">Multi-pass membrane protein</topology>
    </subcellularLocation>
</comment>
<comment type="similarity">
    <text evidence="2">Belongs to the ATPase A chain family.</text>
</comment>
<gene>
    <name evidence="2" type="primary">atpB2</name>
    <name type="ordered locus">Paes_2247</name>
</gene>
<feature type="signal peptide" evidence="1">
    <location>
        <begin position="1"/>
        <end position="33"/>
    </location>
</feature>
<feature type="chain" id="PRO_5000388246" description="ATP synthase subunit a 2">
    <location>
        <begin position="34"/>
        <end position="324"/>
    </location>
</feature>
<feature type="transmembrane region" description="Helical" evidence="2">
    <location>
        <begin position="95"/>
        <end position="115"/>
    </location>
</feature>
<feature type="transmembrane region" description="Helical" evidence="2">
    <location>
        <begin position="157"/>
        <end position="177"/>
    </location>
</feature>
<feature type="transmembrane region" description="Helical" evidence="2">
    <location>
        <begin position="179"/>
        <end position="199"/>
    </location>
</feature>
<feature type="transmembrane region" description="Helical" evidence="2">
    <location>
        <begin position="224"/>
        <end position="244"/>
    </location>
</feature>
<feature type="transmembrane region" description="Helical" evidence="2">
    <location>
        <begin position="257"/>
        <end position="277"/>
    </location>
</feature>
<feature type="transmembrane region" description="Helical" evidence="2">
    <location>
        <begin position="291"/>
        <end position="311"/>
    </location>
</feature>
<accession>B4S6E6</accession>
<organism>
    <name type="scientific">Prosthecochloris aestuarii (strain DSM 271 / SK 413)</name>
    <dbReference type="NCBI Taxonomy" id="290512"/>
    <lineage>
        <taxon>Bacteria</taxon>
        <taxon>Pseudomonadati</taxon>
        <taxon>Chlorobiota</taxon>
        <taxon>Chlorobiia</taxon>
        <taxon>Chlorobiales</taxon>
        <taxon>Chlorobiaceae</taxon>
        <taxon>Prosthecochloris</taxon>
    </lineage>
</organism>
<name>ATP62_PROA2</name>
<proteinExistence type="inferred from homology"/>
<reference key="1">
    <citation type="submission" date="2008-06" db="EMBL/GenBank/DDBJ databases">
        <title>Complete sequence of chromosome of Prosthecochloris aestuarii DSM 271.</title>
        <authorList>
            <consortium name="US DOE Joint Genome Institute"/>
            <person name="Lucas S."/>
            <person name="Copeland A."/>
            <person name="Lapidus A."/>
            <person name="Glavina del Rio T."/>
            <person name="Dalin E."/>
            <person name="Tice H."/>
            <person name="Bruce D."/>
            <person name="Goodwin L."/>
            <person name="Pitluck S."/>
            <person name="Schmutz J."/>
            <person name="Larimer F."/>
            <person name="Land M."/>
            <person name="Hauser L."/>
            <person name="Kyrpides N."/>
            <person name="Anderson I."/>
            <person name="Liu Z."/>
            <person name="Li T."/>
            <person name="Zhao F."/>
            <person name="Overmann J."/>
            <person name="Bryant D.A."/>
            <person name="Richardson P."/>
        </authorList>
    </citation>
    <scope>NUCLEOTIDE SEQUENCE [LARGE SCALE GENOMIC DNA]</scope>
    <source>
        <strain>DSM 271 / SK 413</strain>
    </source>
</reference>
<protein>
    <recommendedName>
        <fullName evidence="2">ATP synthase subunit a 2</fullName>
    </recommendedName>
    <alternativeName>
        <fullName evidence="2">ATP synthase F0 sector subunit a 2</fullName>
    </alternativeName>
    <alternativeName>
        <fullName evidence="2">F-ATPase subunit 6 2</fullName>
    </alternativeName>
</protein>
<evidence type="ECO:0000255" key="1"/>
<evidence type="ECO:0000255" key="2">
    <source>
        <dbReference type="HAMAP-Rule" id="MF_01393"/>
    </source>
</evidence>